<keyword id="KW-0687">Ribonucleoprotein</keyword>
<keyword id="KW-0689">Ribosomal protein</keyword>
<keyword id="KW-0694">RNA-binding</keyword>
<keyword id="KW-0699">rRNA-binding</keyword>
<name>RS19_ACTP7</name>
<gene>
    <name evidence="1" type="primary">rpsS</name>
    <name type="ordered locus">APP7_1849</name>
</gene>
<reference key="1">
    <citation type="submission" date="2008-06" db="EMBL/GenBank/DDBJ databases">
        <title>Genome and proteome analysis of A. pleuropneumoniae serotype 7.</title>
        <authorList>
            <person name="Linke B."/>
            <person name="Buettner F."/>
            <person name="Martinez-Arias R."/>
            <person name="Goesmann A."/>
            <person name="Baltes N."/>
            <person name="Tegetmeyer H."/>
            <person name="Singh M."/>
            <person name="Gerlach G.F."/>
        </authorList>
    </citation>
    <scope>NUCLEOTIDE SEQUENCE [LARGE SCALE GENOMIC DNA]</scope>
    <source>
        <strain>AP76</strain>
    </source>
</reference>
<evidence type="ECO:0000255" key="1">
    <source>
        <dbReference type="HAMAP-Rule" id="MF_00531"/>
    </source>
</evidence>
<evidence type="ECO:0000305" key="2"/>
<feature type="chain" id="PRO_1000127919" description="Small ribosomal subunit protein uS19">
    <location>
        <begin position="1"/>
        <end position="91"/>
    </location>
</feature>
<proteinExistence type="inferred from homology"/>
<accession>B3GZ15</accession>
<dbReference type="EMBL" id="CP001091">
    <property type="protein sequence ID" value="ACE62501.1"/>
    <property type="molecule type" value="Genomic_DNA"/>
</dbReference>
<dbReference type="RefSeq" id="WP_005539416.1">
    <property type="nucleotide sequence ID" value="NC_010939.1"/>
</dbReference>
<dbReference type="SMR" id="B3GZ15"/>
<dbReference type="GeneID" id="93298793"/>
<dbReference type="KEGG" id="apa:APP7_1849"/>
<dbReference type="HOGENOM" id="CLU_144911_0_1_6"/>
<dbReference type="Proteomes" id="UP000001226">
    <property type="component" value="Chromosome"/>
</dbReference>
<dbReference type="GO" id="GO:0005737">
    <property type="term" value="C:cytoplasm"/>
    <property type="evidence" value="ECO:0007669"/>
    <property type="project" value="UniProtKB-ARBA"/>
</dbReference>
<dbReference type="GO" id="GO:0015935">
    <property type="term" value="C:small ribosomal subunit"/>
    <property type="evidence" value="ECO:0007669"/>
    <property type="project" value="InterPro"/>
</dbReference>
<dbReference type="GO" id="GO:0019843">
    <property type="term" value="F:rRNA binding"/>
    <property type="evidence" value="ECO:0007669"/>
    <property type="project" value="UniProtKB-UniRule"/>
</dbReference>
<dbReference type="GO" id="GO:0003735">
    <property type="term" value="F:structural constituent of ribosome"/>
    <property type="evidence" value="ECO:0007669"/>
    <property type="project" value="InterPro"/>
</dbReference>
<dbReference type="GO" id="GO:0000028">
    <property type="term" value="P:ribosomal small subunit assembly"/>
    <property type="evidence" value="ECO:0007669"/>
    <property type="project" value="TreeGrafter"/>
</dbReference>
<dbReference type="GO" id="GO:0006412">
    <property type="term" value="P:translation"/>
    <property type="evidence" value="ECO:0007669"/>
    <property type="project" value="UniProtKB-UniRule"/>
</dbReference>
<dbReference type="FunFam" id="3.30.860.10:FF:000001">
    <property type="entry name" value="30S ribosomal protein S19"/>
    <property type="match status" value="1"/>
</dbReference>
<dbReference type="Gene3D" id="3.30.860.10">
    <property type="entry name" value="30s Ribosomal Protein S19, Chain A"/>
    <property type="match status" value="1"/>
</dbReference>
<dbReference type="HAMAP" id="MF_00531">
    <property type="entry name" value="Ribosomal_uS19"/>
    <property type="match status" value="1"/>
</dbReference>
<dbReference type="InterPro" id="IPR002222">
    <property type="entry name" value="Ribosomal_uS19"/>
</dbReference>
<dbReference type="InterPro" id="IPR005732">
    <property type="entry name" value="Ribosomal_uS19_bac-type"/>
</dbReference>
<dbReference type="InterPro" id="IPR020934">
    <property type="entry name" value="Ribosomal_uS19_CS"/>
</dbReference>
<dbReference type="InterPro" id="IPR023575">
    <property type="entry name" value="Ribosomal_uS19_SF"/>
</dbReference>
<dbReference type="NCBIfam" id="TIGR01050">
    <property type="entry name" value="rpsS_bact"/>
    <property type="match status" value="1"/>
</dbReference>
<dbReference type="PANTHER" id="PTHR11880">
    <property type="entry name" value="RIBOSOMAL PROTEIN S19P FAMILY MEMBER"/>
    <property type="match status" value="1"/>
</dbReference>
<dbReference type="PANTHER" id="PTHR11880:SF8">
    <property type="entry name" value="SMALL RIBOSOMAL SUBUNIT PROTEIN US19M"/>
    <property type="match status" value="1"/>
</dbReference>
<dbReference type="Pfam" id="PF00203">
    <property type="entry name" value="Ribosomal_S19"/>
    <property type="match status" value="1"/>
</dbReference>
<dbReference type="PIRSF" id="PIRSF002144">
    <property type="entry name" value="Ribosomal_S19"/>
    <property type="match status" value="1"/>
</dbReference>
<dbReference type="PRINTS" id="PR00975">
    <property type="entry name" value="RIBOSOMALS19"/>
</dbReference>
<dbReference type="SUPFAM" id="SSF54570">
    <property type="entry name" value="Ribosomal protein S19"/>
    <property type="match status" value="1"/>
</dbReference>
<dbReference type="PROSITE" id="PS00323">
    <property type="entry name" value="RIBOSOMAL_S19"/>
    <property type="match status" value="1"/>
</dbReference>
<sequence>MPRSLKKGPFLDLHLLKKVEKAVESGDKKPIKTWSRRSMIIPSMIGLTIAVHNGRQHVPVYVSDEMIGHKLGEFAPTRTYRGHAADKKAKK</sequence>
<comment type="function">
    <text evidence="1">Protein S19 forms a complex with S13 that binds strongly to the 16S ribosomal RNA.</text>
</comment>
<comment type="similarity">
    <text evidence="1">Belongs to the universal ribosomal protein uS19 family.</text>
</comment>
<organism>
    <name type="scientific">Actinobacillus pleuropneumoniae serotype 7 (strain AP76)</name>
    <dbReference type="NCBI Taxonomy" id="537457"/>
    <lineage>
        <taxon>Bacteria</taxon>
        <taxon>Pseudomonadati</taxon>
        <taxon>Pseudomonadota</taxon>
        <taxon>Gammaproteobacteria</taxon>
        <taxon>Pasteurellales</taxon>
        <taxon>Pasteurellaceae</taxon>
        <taxon>Actinobacillus</taxon>
    </lineage>
</organism>
<protein>
    <recommendedName>
        <fullName evidence="1">Small ribosomal subunit protein uS19</fullName>
    </recommendedName>
    <alternativeName>
        <fullName evidence="2">30S ribosomal protein S19</fullName>
    </alternativeName>
</protein>